<evidence type="ECO:0000255" key="1">
    <source>
        <dbReference type="HAMAP-Rule" id="MF_00184"/>
    </source>
</evidence>
<gene>
    <name evidence="1" type="primary">thrS</name>
    <name type="ordered locus">Tneu_0733</name>
</gene>
<feature type="chain" id="PRO_1000098622" description="Threonine--tRNA ligase">
    <location>
        <begin position="1"/>
        <end position="609"/>
    </location>
</feature>
<feature type="region of interest" description="Editing domain" evidence="1">
    <location>
        <begin position="1"/>
        <end position="143"/>
    </location>
</feature>
<feature type="region of interest" description="Catalytic" evidence="1">
    <location>
        <begin position="195"/>
        <end position="491"/>
    </location>
</feature>
<feature type="region of interest" description="Catalytic">
    <location>
        <begin position="196"/>
        <end position="491"/>
    </location>
</feature>
<feature type="binding site" evidence="1">
    <location>
        <position position="288"/>
    </location>
    <ligand>
        <name>Zn(2+)</name>
        <dbReference type="ChEBI" id="CHEBI:29105"/>
    </ligand>
</feature>
<feature type="binding site" evidence="1">
    <location>
        <position position="339"/>
    </location>
    <ligand>
        <name>Zn(2+)</name>
        <dbReference type="ChEBI" id="CHEBI:29105"/>
    </ligand>
</feature>
<feature type="binding site" evidence="1">
    <location>
        <position position="460"/>
    </location>
    <ligand>
        <name>Zn(2+)</name>
        <dbReference type="ChEBI" id="CHEBI:29105"/>
    </ligand>
</feature>
<proteinExistence type="inferred from homology"/>
<dbReference type="EC" id="6.1.1.3" evidence="1"/>
<dbReference type="EMBL" id="CP001014">
    <property type="protein sequence ID" value="ACB39672.1"/>
    <property type="molecule type" value="Genomic_DNA"/>
</dbReference>
<dbReference type="RefSeq" id="WP_012350092.1">
    <property type="nucleotide sequence ID" value="NC_010525.1"/>
</dbReference>
<dbReference type="SMR" id="B1YD09"/>
<dbReference type="STRING" id="444157.Tneu_0733"/>
<dbReference type="GeneID" id="6165169"/>
<dbReference type="KEGG" id="tne:Tneu_0733"/>
<dbReference type="eggNOG" id="arCOG00401">
    <property type="taxonomic scope" value="Archaea"/>
</dbReference>
<dbReference type="HOGENOM" id="CLU_029833_0_0_2"/>
<dbReference type="OrthoDB" id="372136at2157"/>
<dbReference type="Proteomes" id="UP000001694">
    <property type="component" value="Chromosome"/>
</dbReference>
<dbReference type="GO" id="GO:0005737">
    <property type="term" value="C:cytoplasm"/>
    <property type="evidence" value="ECO:0007669"/>
    <property type="project" value="UniProtKB-SubCell"/>
</dbReference>
<dbReference type="GO" id="GO:0005524">
    <property type="term" value="F:ATP binding"/>
    <property type="evidence" value="ECO:0007669"/>
    <property type="project" value="UniProtKB-UniRule"/>
</dbReference>
<dbReference type="GO" id="GO:0004829">
    <property type="term" value="F:threonine-tRNA ligase activity"/>
    <property type="evidence" value="ECO:0007669"/>
    <property type="project" value="UniProtKB-UniRule"/>
</dbReference>
<dbReference type="GO" id="GO:0000049">
    <property type="term" value="F:tRNA binding"/>
    <property type="evidence" value="ECO:0007669"/>
    <property type="project" value="UniProtKB-KW"/>
</dbReference>
<dbReference type="GO" id="GO:0008270">
    <property type="term" value="F:zinc ion binding"/>
    <property type="evidence" value="ECO:0007669"/>
    <property type="project" value="InterPro"/>
</dbReference>
<dbReference type="GO" id="GO:0006435">
    <property type="term" value="P:threonyl-tRNA aminoacylation"/>
    <property type="evidence" value="ECO:0007669"/>
    <property type="project" value="UniProtKB-UniRule"/>
</dbReference>
<dbReference type="CDD" id="cd00860">
    <property type="entry name" value="ThrRS_anticodon"/>
    <property type="match status" value="1"/>
</dbReference>
<dbReference type="FunFam" id="3.30.930.10:FF:000076">
    <property type="entry name" value="Threonine--tRNA ligase"/>
    <property type="match status" value="1"/>
</dbReference>
<dbReference type="FunFam" id="3.40.50.800:FF:000001">
    <property type="entry name" value="Threonine--tRNA ligase"/>
    <property type="match status" value="1"/>
</dbReference>
<dbReference type="Gene3D" id="3.40.50.800">
    <property type="entry name" value="Anticodon-binding domain"/>
    <property type="match status" value="1"/>
</dbReference>
<dbReference type="Gene3D" id="3.30.930.10">
    <property type="entry name" value="Bira Bifunctional Protein, Domain 2"/>
    <property type="match status" value="1"/>
</dbReference>
<dbReference type="Gene3D" id="3.50.80.10">
    <property type="entry name" value="D-tyrosyl-tRNA(Tyr) deacylase"/>
    <property type="match status" value="1"/>
</dbReference>
<dbReference type="HAMAP" id="MF_00184">
    <property type="entry name" value="Thr_tRNA_synth"/>
    <property type="match status" value="1"/>
</dbReference>
<dbReference type="InterPro" id="IPR002314">
    <property type="entry name" value="aa-tRNA-synt_IIb"/>
</dbReference>
<dbReference type="InterPro" id="IPR006195">
    <property type="entry name" value="aa-tRNA-synth_II"/>
</dbReference>
<dbReference type="InterPro" id="IPR045864">
    <property type="entry name" value="aa-tRNA-synth_II/BPL/LPL"/>
</dbReference>
<dbReference type="InterPro" id="IPR004154">
    <property type="entry name" value="Anticodon-bd"/>
</dbReference>
<dbReference type="InterPro" id="IPR036621">
    <property type="entry name" value="Anticodon-bd_dom_sf"/>
</dbReference>
<dbReference type="InterPro" id="IPR023509">
    <property type="entry name" value="DTD-like_sf"/>
</dbReference>
<dbReference type="InterPro" id="IPR002320">
    <property type="entry name" value="Thr-tRNA-ligase_IIa"/>
</dbReference>
<dbReference type="InterPro" id="IPR015011">
    <property type="entry name" value="Threonyl-tRNA_syn_edit_dom_arc"/>
</dbReference>
<dbReference type="InterPro" id="IPR047246">
    <property type="entry name" value="ThrRS_anticodon"/>
</dbReference>
<dbReference type="NCBIfam" id="NF003068">
    <property type="entry name" value="PRK03991.1"/>
    <property type="match status" value="1"/>
</dbReference>
<dbReference type="PANTHER" id="PTHR11451:SF44">
    <property type="entry name" value="THREONINE--TRNA LIGASE, CHLOROPLASTIC_MITOCHONDRIAL 2"/>
    <property type="match status" value="1"/>
</dbReference>
<dbReference type="PANTHER" id="PTHR11451">
    <property type="entry name" value="THREONINE-TRNA LIGASE"/>
    <property type="match status" value="1"/>
</dbReference>
<dbReference type="Pfam" id="PF03129">
    <property type="entry name" value="HGTP_anticodon"/>
    <property type="match status" value="1"/>
</dbReference>
<dbReference type="Pfam" id="PF00587">
    <property type="entry name" value="tRNA-synt_2b"/>
    <property type="match status" value="1"/>
</dbReference>
<dbReference type="Pfam" id="PF08915">
    <property type="entry name" value="tRNA-Thr_ED"/>
    <property type="match status" value="1"/>
</dbReference>
<dbReference type="PRINTS" id="PR01047">
    <property type="entry name" value="TRNASYNTHTHR"/>
</dbReference>
<dbReference type="SUPFAM" id="SSF52954">
    <property type="entry name" value="Class II aaRS ABD-related"/>
    <property type="match status" value="1"/>
</dbReference>
<dbReference type="SUPFAM" id="SSF55681">
    <property type="entry name" value="Class II aaRS and biotin synthetases"/>
    <property type="match status" value="1"/>
</dbReference>
<dbReference type="PROSITE" id="PS50862">
    <property type="entry name" value="AA_TRNA_LIGASE_II"/>
    <property type="match status" value="1"/>
</dbReference>
<comment type="function">
    <text evidence="1">Catalyzes the attachment of threonine to tRNA(Thr) in a two-step reaction: L-threonine is first activated by ATP to form Thr-AMP and then transferred to the acceptor end of tRNA(Thr). Also edits incorrectly charged L-seryl-tRNA(Thr).</text>
</comment>
<comment type="catalytic activity">
    <reaction evidence="1">
        <text>tRNA(Thr) + L-threonine + ATP = L-threonyl-tRNA(Thr) + AMP + diphosphate + H(+)</text>
        <dbReference type="Rhea" id="RHEA:24624"/>
        <dbReference type="Rhea" id="RHEA-COMP:9670"/>
        <dbReference type="Rhea" id="RHEA-COMP:9704"/>
        <dbReference type="ChEBI" id="CHEBI:15378"/>
        <dbReference type="ChEBI" id="CHEBI:30616"/>
        <dbReference type="ChEBI" id="CHEBI:33019"/>
        <dbReference type="ChEBI" id="CHEBI:57926"/>
        <dbReference type="ChEBI" id="CHEBI:78442"/>
        <dbReference type="ChEBI" id="CHEBI:78534"/>
        <dbReference type="ChEBI" id="CHEBI:456215"/>
        <dbReference type="EC" id="6.1.1.3"/>
    </reaction>
</comment>
<comment type="cofactor">
    <cofactor evidence="1">
        <name>Zn(2+)</name>
        <dbReference type="ChEBI" id="CHEBI:29105"/>
    </cofactor>
    <text evidence="1">Binds 1 zinc ion per subunit.</text>
</comment>
<comment type="subunit">
    <text evidence="1">Homodimer.</text>
</comment>
<comment type="subcellular location">
    <subcellularLocation>
        <location evidence="1">Cytoplasm</location>
    </subcellularLocation>
</comment>
<comment type="domain">
    <text evidence="1">The N-terminal domain is an archaea-specific tRNA-editing domain that hydrolyzes incorrectly charged L-seryl-tRNA(Thr). Catalysis of tRNA editing is performed by the charged tRNA itself.</text>
</comment>
<comment type="similarity">
    <text evidence="1">Belongs to the class-II aminoacyl-tRNA synthetase family.</text>
</comment>
<name>SYT_PYRNV</name>
<sequence>MRVLYLHTERFSWEVKEPALDIRDEPVSGGASNALVVFTTVERGDVPEEGFLRQIARDIVEVAEKVKASSIVIYPYAHLSNELARPYAAREIVNKLYEVVKSEFRGEVYKAPFGYYKAFELKCLGHPLSELSRSFKPGDSRAEKKAEERRDLYIVITPSGEEHDPAKFNYDGYEDLKILVEKEVFKRELGGGSEPRYLEYMRKFGFEWEPMSDVGHMRYAPEATLMMELVEDYAYAVAKSLGIPVFKIRGTNMFKLSERAIESHARLFGERLYIVESDTDLILRYAACFQQFAMVKDWVISYRQLPFGMLEVADSYRLEQPGETVLLFRLRRFYMPDLHIFTKDLAEAMEVTFRLHEAIFREIGKLGRTYVSLYNVTEDFYKAHRQYLVELARREGKPILVRVLPGQKYYWVLNVEFHIIDELGRPREIATFQIDVGNAQRFGIKYVDENNQTRYPVIIHTAILGSVERYLYAVFDTLARAEKEGKAPRLPTWLSPVQVRIIPITRDNLKYAVEVADKFEAEGIRVDVDDRDETLSKRIRDAEVAWVPYICVVGSKEEAEGVVSVRERGGGQYRVKPEDLIKKIREDVRGYPNRPLYMPRFLSQRPTRS</sequence>
<accession>B1YD09</accession>
<keyword id="KW-0030">Aminoacyl-tRNA synthetase</keyword>
<keyword id="KW-0067">ATP-binding</keyword>
<keyword id="KW-0963">Cytoplasm</keyword>
<keyword id="KW-0436">Ligase</keyword>
<keyword id="KW-0479">Metal-binding</keyword>
<keyword id="KW-0547">Nucleotide-binding</keyword>
<keyword id="KW-0648">Protein biosynthesis</keyword>
<keyword id="KW-0694">RNA-binding</keyword>
<keyword id="KW-0820">tRNA-binding</keyword>
<keyword id="KW-0862">Zinc</keyword>
<reference key="1">
    <citation type="submission" date="2008-03" db="EMBL/GenBank/DDBJ databases">
        <title>Complete sequence of Thermoproteus neutrophilus V24Sta.</title>
        <authorList>
            <consortium name="US DOE Joint Genome Institute"/>
            <person name="Copeland A."/>
            <person name="Lucas S."/>
            <person name="Lapidus A."/>
            <person name="Glavina del Rio T."/>
            <person name="Dalin E."/>
            <person name="Tice H."/>
            <person name="Bruce D."/>
            <person name="Goodwin L."/>
            <person name="Pitluck S."/>
            <person name="Sims D."/>
            <person name="Brettin T."/>
            <person name="Detter J.C."/>
            <person name="Han C."/>
            <person name="Kuske C.R."/>
            <person name="Schmutz J."/>
            <person name="Larimer F."/>
            <person name="Land M."/>
            <person name="Hauser L."/>
            <person name="Kyrpides N."/>
            <person name="Mikhailova N."/>
            <person name="Biddle J.F."/>
            <person name="Zhang Z."/>
            <person name="Fitz-Gibbon S.T."/>
            <person name="Lowe T.M."/>
            <person name="Saltikov C."/>
            <person name="House C.H."/>
            <person name="Richardson P."/>
        </authorList>
    </citation>
    <scope>NUCLEOTIDE SEQUENCE [LARGE SCALE GENOMIC DNA]</scope>
    <source>
        <strain>DSM 2338 / JCM 9278 / NBRC 100436 / V24Sta</strain>
    </source>
</reference>
<organism>
    <name type="scientific">Pyrobaculum neutrophilum (strain DSM 2338 / JCM 9278 / NBRC 100436 / V24Sta)</name>
    <name type="common">Thermoproteus neutrophilus</name>
    <dbReference type="NCBI Taxonomy" id="444157"/>
    <lineage>
        <taxon>Archaea</taxon>
        <taxon>Thermoproteota</taxon>
        <taxon>Thermoprotei</taxon>
        <taxon>Thermoproteales</taxon>
        <taxon>Thermoproteaceae</taxon>
        <taxon>Pyrobaculum</taxon>
    </lineage>
</organism>
<protein>
    <recommendedName>
        <fullName evidence="1">Threonine--tRNA ligase</fullName>
        <ecNumber evidence="1">6.1.1.3</ecNumber>
    </recommendedName>
    <alternativeName>
        <fullName evidence="1">Threonyl-tRNA synthetase</fullName>
        <shortName evidence="1">ThrRS</shortName>
    </alternativeName>
</protein>